<name>VP30_EBORE</name>
<protein>
    <recommendedName>
        <fullName evidence="2">Transcriptional activator VP30</fullName>
    </recommendedName>
    <alternativeName>
        <fullName evidence="2">EbolaVP30</fullName>
        <shortName evidence="2">eVP30</shortName>
    </alternativeName>
    <alternativeName>
        <fullName>Minor nucleoprotein VP30</fullName>
    </alternativeName>
</protein>
<reference key="1">
    <citation type="journal article" date="2001" name="Arch. Virol.">
        <title>Genome structure of Ebola virus subtype Reston: differences among Ebola subtypes.</title>
        <authorList>
            <person name="Ikegami T."/>
            <person name="Calaor A.B."/>
            <person name="Miranda M.E."/>
            <person name="Niikura M."/>
            <person name="Saijo M."/>
            <person name="Kurane I."/>
            <person name="Yoshikawa Y."/>
            <person name="Morikawa S."/>
        </authorList>
    </citation>
    <scope>NUCLEOTIDE SEQUENCE [GENOMIC RNA]</scope>
</reference>
<comment type="function">
    <text evidence="2 3">Multifunctional protein that acts as a viral transcriptional activator. Promotes read-through of an RNA hairpin in the NP open reading frame to enhance viral transcription. Mechanistically, nonphosphorylated VP30 hexamers form a ternary complex with the viral leader RNA. Clamps the RNA template and the complex VP35-polymerase L together, thereby increasing the polymerase affinity for the RNA template to increase transcription initiation despite the presence of RNA secondary structures. Also assists stop-start transcription at gene junctions to promote transcription of downstream genes. Interaction with NP plays a critical role in transcription initiation by recognizing the RNA stem loop (By similarity). Interaction with host RBBP6 interferes with NP-VP30 interaction and inhibits viral RNA synthesis. Also acts as a suppressor of RNA silencing by interacting with host DICER1 and TARBP2/TRBP (By similarity).</text>
</comment>
<comment type="subunit">
    <text evidence="2 3">Homohexamer; hexamerization is essential for RNA binding. Interacts with the nucleoprotein/NP; this interaction plays both essential and inhibitory roles in viral RNA synthesis. Interacts with VP35. Interacts with host STAU1 (By similarity). Interacts (via C-terminus) with host RBBP6 isoform 1 (By similarity). Interacts with host DICER1; this interaction prevents TARBP2/TRBP binding to DICER1 and thus allows the virus to counteract host RNA silencing (By similarity). Interacts with host TARBP2/TRBP; this interaction, which occurs only in the presence of siRNA, prevents TARBP2 binding to DICER1 and thus allows the virus to counteract host RNA silencing (By similarity).</text>
</comment>
<comment type="subcellular location">
    <subcellularLocation>
        <location evidence="2">Virion</location>
    </subcellularLocation>
    <subcellularLocation>
        <location evidence="2">Host cytoplasm</location>
    </subcellularLocation>
    <text evidence="2">Present in viral inclusion bodies due to its interaction with NP.</text>
</comment>
<comment type="PTM">
    <text evidence="2">Phosphorylated by host. Phosphorylation negatively regulates the transcription activation. Phosphorylation and dephosphorylation take place in viral inclusion bodies and are largely influenced by the presence of NP. Dephosphorylated by host PPP2R5C; this dephosphorylation enhances viral transcription and is mediated by NP.</text>
</comment>
<comment type="similarity">
    <text evidence="5">Belongs to the filoviridae transcriptional activator VP30 family.</text>
</comment>
<keyword id="KW-0010">Activator</keyword>
<keyword id="KW-1035">Host cytoplasm</keyword>
<keyword id="KW-0945">Host-virus interaction</keyword>
<keyword id="KW-1090">Inhibition of host innate immune response by virus</keyword>
<keyword id="KW-0479">Metal-binding</keyword>
<keyword id="KW-0597">Phosphoprotein</keyword>
<keyword id="KW-0694">RNA-binding</keyword>
<keyword id="KW-0941">Suppressor of RNA silencing</keyword>
<keyword id="KW-0804">Transcription</keyword>
<keyword id="KW-0899">Viral immunoevasion</keyword>
<keyword id="KW-0543">Viral nucleoprotein</keyword>
<keyword id="KW-0946">Virion</keyword>
<keyword id="KW-0862">Zinc</keyword>
<keyword id="KW-0863">Zinc-finger</keyword>
<organism>
    <name type="scientific">Reston ebolavirus (strain Philippines-96)</name>
    <name type="common">REBOV</name>
    <name type="synonym">Reston Ebola virus</name>
    <dbReference type="NCBI Taxonomy" id="129003"/>
    <lineage>
        <taxon>Viruses</taxon>
        <taxon>Riboviria</taxon>
        <taxon>Orthornavirae</taxon>
        <taxon>Negarnaviricota</taxon>
        <taxon>Haploviricotina</taxon>
        <taxon>Monjiviricetes</taxon>
        <taxon>Mononegavirales</taxon>
        <taxon>Filoviridae</taxon>
        <taxon>Orthoebolavirus</taxon>
        <taxon>Orthoebolavirus restonense</taxon>
        <taxon>Reston ebolavirus</taxon>
    </lineage>
</organism>
<organismHost>
    <name type="scientific">Homo sapiens</name>
    <name type="common">Human</name>
    <dbReference type="NCBI Taxonomy" id="9606"/>
</organismHost>
<organismHost>
    <name type="scientific">Macaca fascicularis</name>
    <name type="common">Crab-eating macaque</name>
    <name type="synonym">Cynomolgus monkey</name>
    <dbReference type="NCBI Taxonomy" id="9541"/>
</organismHost>
<organismHost>
    <name type="scientific">Pteropodinae</name>
    <dbReference type="NCBI Taxonomy" id="77225"/>
</organismHost>
<organismHost>
    <name type="scientific">Sus scrofa</name>
    <name type="common">Pig</name>
    <dbReference type="NCBI Taxonomy" id="9823"/>
</organismHost>
<accession>Q91DD6</accession>
<sequence>MEHSRERGRSSNMRHNSREPYENPSRSRSLSRDPNQVDRRQPRSASQIRVPNLFHRKKTDALIVPPAPKDICPTLKKGFLCDSKFCKKDHQLDSLNDHELLLLIARRTCGIIESNSQITSPKDMRLANPTAEDFSQGNSPKLTLAVLLQIAEHWATRDLRQIEDSKLRALLTLCAVLTRKFSKSQLGLLCETHLRHEGLGQDQADSVLEVYQRLHSDKGGNFEAALWQQWDRQSLIMFISAFLNIALQTPCESSSVVVSGLATLYPAQDNSTPSEATNDTTWSSTVE</sequence>
<dbReference type="EMBL" id="AB050936">
    <property type="protein sequence ID" value="BAB69008.1"/>
    <property type="molecule type" value="Genomic_RNA"/>
</dbReference>
<dbReference type="SMR" id="Q91DD6"/>
<dbReference type="Proteomes" id="UP000002322">
    <property type="component" value="Genome"/>
</dbReference>
<dbReference type="GO" id="GO:0030430">
    <property type="term" value="C:host cell cytoplasm"/>
    <property type="evidence" value="ECO:0007669"/>
    <property type="project" value="UniProtKB-SubCell"/>
</dbReference>
<dbReference type="GO" id="GO:0019013">
    <property type="term" value="C:viral nucleocapsid"/>
    <property type="evidence" value="ECO:0007669"/>
    <property type="project" value="UniProtKB-KW"/>
</dbReference>
<dbReference type="GO" id="GO:0003723">
    <property type="term" value="F:RNA binding"/>
    <property type="evidence" value="ECO:0007669"/>
    <property type="project" value="UniProtKB-KW"/>
</dbReference>
<dbReference type="GO" id="GO:0008270">
    <property type="term" value="F:zinc ion binding"/>
    <property type="evidence" value="ECO:0007669"/>
    <property type="project" value="UniProtKB-KW"/>
</dbReference>
<dbReference type="GO" id="GO:0052170">
    <property type="term" value="P:symbiont-mediated suppression of host innate immune response"/>
    <property type="evidence" value="ECO:0007669"/>
    <property type="project" value="UniProtKB-KW"/>
</dbReference>
<dbReference type="Gene3D" id="1.20.120.1160">
    <property type="match status" value="1"/>
</dbReference>
<dbReference type="InterPro" id="IPR014459">
    <property type="entry name" value="VP30_FiloV"/>
</dbReference>
<dbReference type="Pfam" id="PF11507">
    <property type="entry name" value="Transcript_VP30"/>
    <property type="match status" value="1"/>
</dbReference>
<dbReference type="PIRSF" id="PIRSF011356">
    <property type="entry name" value="VP30_FiloV"/>
    <property type="match status" value="1"/>
</dbReference>
<feature type="chain" id="PRO_0000245071" description="Transcriptional activator VP30">
    <location>
        <begin position="1"/>
        <end position="287"/>
    </location>
</feature>
<feature type="zinc finger region" description="C3H1-type; atypical">
    <location>
        <begin position="72"/>
        <end position="90"/>
    </location>
</feature>
<feature type="region of interest" description="Disordered" evidence="4">
    <location>
        <begin position="1"/>
        <end position="52"/>
    </location>
</feature>
<feature type="region of interest" description="RNA-binding" evidence="2">
    <location>
        <begin position="26"/>
        <end position="40"/>
    </location>
</feature>
<feature type="region of interest" description="Oligomerization" evidence="1">
    <location>
        <begin position="94"/>
        <end position="112"/>
    </location>
</feature>
<feature type="region of interest" description="Interaction with the nucleoprotein" evidence="1">
    <location>
        <begin position="180"/>
        <end position="197"/>
    </location>
</feature>
<feature type="region of interest" description="Disordered" evidence="4">
    <location>
        <begin position="268"/>
        <end position="287"/>
    </location>
</feature>
<feature type="compositionally biased region" description="Polar residues" evidence="4">
    <location>
        <begin position="24"/>
        <end position="34"/>
    </location>
</feature>
<proteinExistence type="inferred from homology"/>
<gene>
    <name type="primary">VP30</name>
</gene>
<evidence type="ECO:0000250" key="1"/>
<evidence type="ECO:0000250" key="2">
    <source>
        <dbReference type="UniProtKB" id="Q05323"/>
    </source>
</evidence>
<evidence type="ECO:0000250" key="3">
    <source>
        <dbReference type="UniProtKB" id="Q77DJ5"/>
    </source>
</evidence>
<evidence type="ECO:0000256" key="4">
    <source>
        <dbReference type="SAM" id="MobiDB-lite"/>
    </source>
</evidence>
<evidence type="ECO:0000305" key="5"/>